<gene>
    <name type="primary">parB</name>
    <name type="ordered locus">TC_0060</name>
</gene>
<name>PARB_CHLMU</name>
<evidence type="ECO:0000250" key="1"/>
<evidence type="ECO:0000305" key="2"/>
<comment type="function">
    <text evidence="1">Involved in chromosome partition. Localize to both poles of the predivisional cell following completion of DNA replication. Binds to the DNA origin of replication (By similarity).</text>
</comment>
<comment type="similarity">
    <text evidence="2">Belongs to the ParB family.</text>
</comment>
<proteinExistence type="inferred from homology"/>
<accession>Q9PLN9</accession>
<reference key="1">
    <citation type="journal article" date="2000" name="Nucleic Acids Res.">
        <title>Genome sequences of Chlamydia trachomatis MoPn and Chlamydia pneumoniae AR39.</title>
        <authorList>
            <person name="Read T.D."/>
            <person name="Brunham R.C."/>
            <person name="Shen C."/>
            <person name="Gill S.R."/>
            <person name="Heidelberg J.F."/>
            <person name="White O."/>
            <person name="Hickey E.K."/>
            <person name="Peterson J.D."/>
            <person name="Utterback T.R."/>
            <person name="Berry K.J."/>
            <person name="Bass S."/>
            <person name="Linher K.D."/>
            <person name="Weidman J.F."/>
            <person name="Khouri H.M."/>
            <person name="Craven B."/>
            <person name="Bowman C."/>
            <person name="Dodson R.J."/>
            <person name="Gwinn M.L."/>
            <person name="Nelson W.C."/>
            <person name="DeBoy R.T."/>
            <person name="Kolonay J.F."/>
            <person name="McClarty G."/>
            <person name="Salzberg S.L."/>
            <person name="Eisen J.A."/>
            <person name="Fraser C.M."/>
        </authorList>
    </citation>
    <scope>NUCLEOTIDE SEQUENCE [LARGE SCALE GENOMIC DNA]</scope>
    <source>
        <strain>MoPn / Nigg</strain>
    </source>
</reference>
<keyword id="KW-0159">Chromosome partition</keyword>
<keyword id="KW-0238">DNA-binding</keyword>
<sequence>MSKLPGEDTLLEVNIDDIRVSPFQPRRIFFEEDLKELILSIKAVGLIHPPVVREIRNGDKVLYYELIAGERRWRALQSAGYKTIPVVLKQVLADDLAAEATLIENIQRVNLNPLEMAEAFRRLIVVFGLTQDKVAKKVGKKRSTVANYLRLFSLSNEIQEKINSGELTLGHAKVILSLEDESLRQILSEKIISSKLAVREAEIEAKRLLKGKEDASKKEASLQKTSCLVSYQERLATTFGYPVTVKPQGKRICVSFFVEGEEALESLEKALTAGSFEVTV</sequence>
<protein>
    <recommendedName>
        <fullName>Probable chromosome-partitioning protein ParB</fullName>
    </recommendedName>
</protein>
<organism>
    <name type="scientific">Chlamydia muridarum (strain MoPn / Nigg)</name>
    <dbReference type="NCBI Taxonomy" id="243161"/>
    <lineage>
        <taxon>Bacteria</taxon>
        <taxon>Pseudomonadati</taxon>
        <taxon>Chlamydiota</taxon>
        <taxon>Chlamydiia</taxon>
        <taxon>Chlamydiales</taxon>
        <taxon>Chlamydiaceae</taxon>
        <taxon>Chlamydia/Chlamydophila group</taxon>
        <taxon>Chlamydia</taxon>
    </lineage>
</organism>
<dbReference type="EMBL" id="AE002160">
    <property type="protein sequence ID" value="AAF38945.1"/>
    <property type="molecule type" value="Genomic_DNA"/>
</dbReference>
<dbReference type="PIR" id="A81746">
    <property type="entry name" value="A81746"/>
</dbReference>
<dbReference type="RefSeq" id="WP_010229253.1">
    <property type="nucleotide sequence ID" value="NZ_CP063055.1"/>
</dbReference>
<dbReference type="SMR" id="Q9PLN9"/>
<dbReference type="GeneID" id="1245589"/>
<dbReference type="KEGG" id="cmu:TC_0060"/>
<dbReference type="eggNOG" id="COG1475">
    <property type="taxonomic scope" value="Bacteria"/>
</dbReference>
<dbReference type="HOGENOM" id="CLU_023853_0_0_0"/>
<dbReference type="OrthoDB" id="9802051at2"/>
<dbReference type="Proteomes" id="UP000000800">
    <property type="component" value="Chromosome"/>
</dbReference>
<dbReference type="GO" id="GO:0005694">
    <property type="term" value="C:chromosome"/>
    <property type="evidence" value="ECO:0007669"/>
    <property type="project" value="TreeGrafter"/>
</dbReference>
<dbReference type="GO" id="GO:0003677">
    <property type="term" value="F:DNA binding"/>
    <property type="evidence" value="ECO:0007669"/>
    <property type="project" value="UniProtKB-KW"/>
</dbReference>
<dbReference type="GO" id="GO:0007059">
    <property type="term" value="P:chromosome segregation"/>
    <property type="evidence" value="ECO:0007669"/>
    <property type="project" value="UniProtKB-KW"/>
</dbReference>
<dbReference type="GO" id="GO:0045881">
    <property type="term" value="P:positive regulation of sporulation resulting in formation of a cellular spore"/>
    <property type="evidence" value="ECO:0007669"/>
    <property type="project" value="TreeGrafter"/>
</dbReference>
<dbReference type="FunFam" id="1.10.10.2830:FF:000001">
    <property type="entry name" value="Chromosome partitioning protein ParB"/>
    <property type="match status" value="1"/>
</dbReference>
<dbReference type="FunFam" id="3.90.1530.30:FF:000001">
    <property type="entry name" value="Chromosome partitioning protein ParB"/>
    <property type="match status" value="1"/>
</dbReference>
<dbReference type="Gene3D" id="1.10.10.2830">
    <property type="match status" value="1"/>
</dbReference>
<dbReference type="Gene3D" id="3.90.1530.30">
    <property type="match status" value="1"/>
</dbReference>
<dbReference type="InterPro" id="IPR050336">
    <property type="entry name" value="Chromosome_partition/occlusion"/>
</dbReference>
<dbReference type="InterPro" id="IPR041468">
    <property type="entry name" value="HTH_ParB/Spo0J"/>
</dbReference>
<dbReference type="InterPro" id="IPR004437">
    <property type="entry name" value="ParB/RepB/Spo0J"/>
</dbReference>
<dbReference type="InterPro" id="IPR003115">
    <property type="entry name" value="ParB/Sulfiredoxin_dom"/>
</dbReference>
<dbReference type="InterPro" id="IPR036086">
    <property type="entry name" value="ParB/Sulfiredoxin_sf"/>
</dbReference>
<dbReference type="NCBIfam" id="TIGR00180">
    <property type="entry name" value="parB_part"/>
    <property type="match status" value="1"/>
</dbReference>
<dbReference type="PANTHER" id="PTHR33375">
    <property type="entry name" value="CHROMOSOME-PARTITIONING PROTEIN PARB-RELATED"/>
    <property type="match status" value="1"/>
</dbReference>
<dbReference type="PANTHER" id="PTHR33375:SF1">
    <property type="entry name" value="CHROMOSOME-PARTITIONING PROTEIN PARB-RELATED"/>
    <property type="match status" value="1"/>
</dbReference>
<dbReference type="Pfam" id="PF17762">
    <property type="entry name" value="HTH_ParB"/>
    <property type="match status" value="1"/>
</dbReference>
<dbReference type="Pfam" id="PF02195">
    <property type="entry name" value="ParBc"/>
    <property type="match status" value="1"/>
</dbReference>
<dbReference type="SMART" id="SM00470">
    <property type="entry name" value="ParB"/>
    <property type="match status" value="1"/>
</dbReference>
<dbReference type="SUPFAM" id="SSF110849">
    <property type="entry name" value="ParB/Sulfiredoxin"/>
    <property type="match status" value="1"/>
</dbReference>
<feature type="chain" id="PRO_0000178677" description="Probable chromosome-partitioning protein ParB">
    <location>
        <begin position="1"/>
        <end position="280"/>
    </location>
</feature>